<comment type="function">
    <text evidence="2">Involved in phosphonate degradation. Functions as a lyase that catalyzes an elimination reaction on the naturally occurring compound (R)-1-hydroxy-2-aminoethylphosphonate ((R)-HAEP), releasing ammonia and generating phosphonoacetaldehyde (PAA), which can be then hydrolyzed by PhnX, encoded by an adjacent gene. Thus, catalyzes a reaction that serves to funnel (R)-HAEP into the hydrolytic pathway for aminoethylphosphonate (AEP, the most common biogenic phosphonate) degradation, expanding the scope and the usefulness of the pathway itself. Is not active toward the (S) enantiomer of HAEP or other HAEP-related compounds such as ethanolamine and D,L-isoserine, indicating a very high substrate specificity.</text>
</comment>
<comment type="catalytic activity">
    <reaction evidence="2">
        <text>(1R)-(2-amino-1-hydroxyethyl)phosphonate = phosphonoacetaldehyde + NH4(+)</text>
        <dbReference type="Rhea" id="RHEA:72879"/>
        <dbReference type="ChEBI" id="CHEBI:28938"/>
        <dbReference type="ChEBI" id="CHEBI:58383"/>
        <dbReference type="ChEBI" id="CHEBI:141612"/>
        <dbReference type="EC" id="4.3.1.33"/>
    </reaction>
    <physiologicalReaction direction="left-to-right" evidence="5">
        <dbReference type="Rhea" id="RHEA:72880"/>
    </physiologicalReaction>
</comment>
<comment type="cofactor">
    <cofactor evidence="2">
        <name>pyridoxal 5'-phosphate</name>
        <dbReference type="ChEBI" id="CHEBI:597326"/>
    </cofactor>
</comment>
<comment type="biophysicochemical properties">
    <kinetics>
        <KM evidence="2">0.43 mM for (1R)-(2-amino-1-hydroxyethyl)phosphonate</KM>
        <text evidence="2">kcat is 5.3 sec(-1) (at pH 8.0 and 25 degrees Celsius).</text>
    </kinetics>
</comment>
<comment type="miscellaneous">
    <text evidence="5">Phosphonates represent an important source of bioavailable phosphorus, in particular in marine environments, where the bioavailability of phosphorus is often a limiting factor for bacterial growth.</text>
</comment>
<comment type="similarity">
    <text evidence="4">Belongs to the class-III pyridoxal-phosphate-dependent aminotransferase family.</text>
</comment>
<organism>
    <name type="scientific">Vibrio splendidus (strain 12B01)</name>
    <dbReference type="NCBI Taxonomy" id="314291"/>
    <lineage>
        <taxon>Bacteria</taxon>
        <taxon>Pseudomonadati</taxon>
        <taxon>Pseudomonadota</taxon>
        <taxon>Gammaproteobacteria</taxon>
        <taxon>Vibrionales</taxon>
        <taxon>Vibrionaceae</taxon>
        <taxon>Vibrio</taxon>
    </lineage>
</organism>
<sequence>MTTTNQEPILKATHFRSEGDVNTTPAREKWNESLNDDATQAMLKRDSDVFLHQAMSTPCLDTLTAAEGIYIQDATGKKYMDFHGNNVHQLGYGHPHIINKVTQQMASLPFSPRRFTNETAVQCAEKLTQICGGDLNRVLFAPGGTSVIGMALKLARHVTNNFKVVSLWDSFHGASLDAISVGGEACFREGMGPLMAGVERIPPAVSYRGAFPLRDSLSLRGQNSGDANETACDVHYADYLEYVIEKEGGIGAFIAEAVRNTDVQVPSKAYWKRIREICDKHNVMLIIDDIPNGMGRSGEWFTHQAFDIEPDILCIGKGFGGGLVPIAAMITKDKYNTAAQVSLGHYTHEKSPIGCAAALATMEVIEQENLLEKVQADSAFVREQLLQMKEEYPVIGDIRGIGLLWGVELVTDHITKTRAFDEAEAVLYQCLNEGLSFKVSQGNVIQLSPPLIISRNELEVALSVFEKAIAKVCKDFEYL</sequence>
<protein>
    <recommendedName>
        <fullName evidence="3">(R)-1-hydroxy-2-aminoethylphosphonate ammonia-lyase</fullName>
        <shortName evidence="3">(R)-HAEP ammonia-lyase</shortName>
        <ecNumber evidence="2">4.3.1.33</ecNumber>
    </recommendedName>
    <alternativeName>
        <fullName evidence="3">Phosphonate breakdown factor A</fullName>
    </alternativeName>
</protein>
<evidence type="ECO:0000250" key="1">
    <source>
        <dbReference type="UniProtKB" id="P40732"/>
    </source>
</evidence>
<evidence type="ECO:0000269" key="2">
    <source>
    </source>
</evidence>
<evidence type="ECO:0000303" key="3">
    <source>
    </source>
</evidence>
<evidence type="ECO:0000305" key="4"/>
<evidence type="ECO:0000305" key="5">
    <source>
    </source>
</evidence>
<evidence type="ECO:0000312" key="6">
    <source>
        <dbReference type="EMBL" id="EAP92040.1"/>
    </source>
</evidence>
<feature type="chain" id="PRO_0000456699" description="(R)-1-hydroxy-2-aminoethylphosphonate ammonia-lyase">
    <location>
        <begin position="1"/>
        <end position="479"/>
    </location>
</feature>
<feature type="modified residue" description="N6-(pyridoxal phosphate)lysine" evidence="1">
    <location>
        <position position="317"/>
    </location>
</feature>
<proteinExistence type="evidence at protein level"/>
<name>PBFA_VIBS1</name>
<dbReference type="EC" id="4.3.1.33" evidence="2"/>
<dbReference type="EMBL" id="AAMR01000070">
    <property type="protein sequence ID" value="EAP92040.1"/>
    <property type="molecule type" value="Genomic_DNA"/>
</dbReference>
<dbReference type="RefSeq" id="WP_004730150.1">
    <property type="nucleotide sequence ID" value="NZ_CH724170.1"/>
</dbReference>
<dbReference type="SMR" id="A3UZK3"/>
<dbReference type="HOGENOM" id="CLU_016922_4_0_6"/>
<dbReference type="GO" id="GO:0034386">
    <property type="term" value="F:4-aminobutyrate:2-oxoglutarate transaminase activity"/>
    <property type="evidence" value="ECO:0007669"/>
    <property type="project" value="UniProtKB-EC"/>
</dbReference>
<dbReference type="GO" id="GO:0016829">
    <property type="term" value="F:lyase activity"/>
    <property type="evidence" value="ECO:0007669"/>
    <property type="project" value="UniProtKB-KW"/>
</dbReference>
<dbReference type="GO" id="GO:0030170">
    <property type="term" value="F:pyridoxal phosphate binding"/>
    <property type="evidence" value="ECO:0007669"/>
    <property type="project" value="InterPro"/>
</dbReference>
<dbReference type="CDD" id="cd00610">
    <property type="entry name" value="OAT_like"/>
    <property type="match status" value="1"/>
</dbReference>
<dbReference type="Gene3D" id="3.90.1150.10">
    <property type="entry name" value="Aspartate Aminotransferase, domain 1"/>
    <property type="match status" value="1"/>
</dbReference>
<dbReference type="Gene3D" id="3.40.640.10">
    <property type="entry name" value="Type I PLP-dependent aspartate aminotransferase-like (Major domain)"/>
    <property type="match status" value="1"/>
</dbReference>
<dbReference type="InterPro" id="IPR005814">
    <property type="entry name" value="Aminotrans_3"/>
</dbReference>
<dbReference type="InterPro" id="IPR049704">
    <property type="entry name" value="Aminotrans_3_PPA_site"/>
</dbReference>
<dbReference type="InterPro" id="IPR015424">
    <property type="entry name" value="PyrdxlP-dep_Trfase"/>
</dbReference>
<dbReference type="InterPro" id="IPR015421">
    <property type="entry name" value="PyrdxlP-dep_Trfase_major"/>
</dbReference>
<dbReference type="InterPro" id="IPR015422">
    <property type="entry name" value="PyrdxlP-dep_Trfase_small"/>
</dbReference>
<dbReference type="NCBIfam" id="NF004755">
    <property type="entry name" value="PRK06082.1"/>
    <property type="match status" value="1"/>
</dbReference>
<dbReference type="PANTHER" id="PTHR43094">
    <property type="entry name" value="AMINOTRANSFERASE"/>
    <property type="match status" value="1"/>
</dbReference>
<dbReference type="PANTHER" id="PTHR43094:SF1">
    <property type="entry name" value="AMINOTRANSFERASE CLASS-III"/>
    <property type="match status" value="1"/>
</dbReference>
<dbReference type="Pfam" id="PF00202">
    <property type="entry name" value="Aminotran_3"/>
    <property type="match status" value="1"/>
</dbReference>
<dbReference type="PIRSF" id="PIRSF000521">
    <property type="entry name" value="Transaminase_4ab_Lys_Orn"/>
    <property type="match status" value="1"/>
</dbReference>
<dbReference type="SUPFAM" id="SSF53383">
    <property type="entry name" value="PLP-dependent transferases"/>
    <property type="match status" value="1"/>
</dbReference>
<dbReference type="PROSITE" id="PS00600">
    <property type="entry name" value="AA_TRANSFER_CLASS_3"/>
    <property type="match status" value="1"/>
</dbReference>
<keyword id="KW-0456">Lyase</keyword>
<keyword id="KW-0663">Pyridoxal phosphate</keyword>
<reference key="1">
    <citation type="submission" date="2006-01" db="EMBL/GenBank/DDBJ databases">
        <authorList>
            <person name="Polz M."/>
            <person name="Ferriera S."/>
            <person name="Johnson J."/>
            <person name="Kravitz S."/>
            <person name="Halpern A."/>
            <person name="Remington K."/>
            <person name="Beeson K."/>
            <person name="Tran B."/>
            <person name="Rogers Y.-H."/>
            <person name="Friedman R."/>
            <person name="Venter J.C."/>
        </authorList>
    </citation>
    <scope>NUCLEOTIDE SEQUENCE [LARGE SCALE GENOMIC DNA]</scope>
    <source>
        <strain>12B01</strain>
    </source>
</reference>
<reference key="2">
    <citation type="journal article" date="2021" name="Biochemistry">
        <title>Discovery of a New, Recurrent Enzyme in Bacterial Phosphonate Degradation: (R)-1-Hydroxy-2-aminoethylphosphonate Ammonia-lyase.</title>
        <authorList>
            <person name="Zangelmi E."/>
            <person name="Stankovic T."/>
            <person name="Malatesta M."/>
            <person name="Acquotti D."/>
            <person name="Pallitsch K."/>
            <person name="Peracchi A."/>
        </authorList>
    </citation>
    <scope>FUNCTION</scope>
    <scope>CATALYTIC ACTIVITY</scope>
    <scope>BIOPHYSICOCHEMICAL PROPERTIES</scope>
    <scope>COFACTOR</scope>
    <source>
        <strain>12B01</strain>
    </source>
</reference>
<accession>A3UZK3</accession>
<gene>
    <name evidence="3" type="primary">pbfA</name>
    <name evidence="6" type="ORF">V12B01_11480</name>
</gene>